<proteinExistence type="evidence at protein level"/>
<comment type="function">
    <text evidence="2">Links the histone deacetylase complex to transcriptional repressors bound to chromatin. Involved in the tethering of the SIN3 complex to core histone proteins.</text>
</comment>
<comment type="subunit">
    <text evidence="2">Interacts with SIN3, ERF3, ERF4 and HDA19.</text>
</comment>
<comment type="interaction">
    <interactant intactId="EBI-965964">
        <id>O64644</id>
    </interactant>
    <interactant intactId="EBI-25521547">
        <id>Q8GWK2</id>
        <label>At2g41710</label>
    </interactant>
    <organismsDiffer>false</organismsDiffer>
    <experiments>3</experiments>
</comment>
<comment type="interaction">
    <interactant intactId="EBI-965964">
        <id>O64644</id>
    </interactant>
    <interactant intactId="EBI-965993">
        <id>O80339</id>
        <label>ERF3</label>
    </interactant>
    <organismsDiffer>false</organismsDiffer>
    <experiments>4</experiments>
</comment>
<comment type="interaction">
    <interactant intactId="EBI-965964">
        <id>O64644</id>
    </interactant>
    <interactant intactId="EBI-966009">
        <id>O80340</id>
        <label>ERF4</label>
    </interactant>
    <organismsDiffer>false</organismsDiffer>
    <experiments>2</experiments>
</comment>
<comment type="interaction">
    <interactant intactId="EBI-965964">
        <id>O64644</id>
    </interactant>
    <interactant intactId="EBI-593040">
        <id>O22446</id>
        <label>HDA19</label>
    </interactant>
    <organismsDiffer>false</organismsDiffer>
    <experiments>2</experiments>
</comment>
<comment type="alternative products">
    <event type="alternative splicing"/>
    <isoform>
        <id>O64644-1</id>
        <name>1</name>
        <sequence type="displayed"/>
    </isoform>
    <text>A number of isoforms are produced. According to EST sequences.</text>
</comment>
<comment type="tissue specificity">
    <text evidence="2">Ubiquitous, with low level in flowers.</text>
</comment>
<comment type="induction">
    <text evidence="2">By salt, cold, drought, abscisic acid and ethylene treatment.</text>
</comment>
<comment type="disruption phenotype">
    <text evidence="2">Plants are hypersensitive to salt.</text>
</comment>
<comment type="similarity">
    <text evidence="3">Belongs to the SAP18 family.</text>
</comment>
<accession>O64644</accession>
<accession>Q0WTU2</accession>
<accession>Q8L8K8</accession>
<dbReference type="EMBL" id="AC003680">
    <property type="protein sequence ID" value="AAC06174.1"/>
    <property type="molecule type" value="Genomic_DNA"/>
</dbReference>
<dbReference type="EMBL" id="CP002685">
    <property type="protein sequence ID" value="AEC10580.1"/>
    <property type="molecule type" value="Genomic_DNA"/>
</dbReference>
<dbReference type="EMBL" id="AF378876">
    <property type="protein sequence ID" value="AAK55679.1"/>
    <property type="molecule type" value="mRNA"/>
</dbReference>
<dbReference type="EMBL" id="AY050474">
    <property type="protein sequence ID" value="AAK91487.1"/>
    <property type="molecule type" value="mRNA"/>
</dbReference>
<dbReference type="EMBL" id="AY088934">
    <property type="protein sequence ID" value="AAM67239.1"/>
    <property type="molecule type" value="mRNA"/>
</dbReference>
<dbReference type="EMBL" id="AK227453">
    <property type="protein sequence ID" value="BAE99456.1"/>
    <property type="molecule type" value="mRNA"/>
</dbReference>
<dbReference type="PIR" id="T00877">
    <property type="entry name" value="T00877"/>
</dbReference>
<dbReference type="RefSeq" id="NP_566050.1">
    <molecule id="O64644-1"/>
    <property type="nucleotide sequence ID" value="NM_130126.4"/>
</dbReference>
<dbReference type="SMR" id="O64644"/>
<dbReference type="BioGRID" id="4508">
    <property type="interactions" value="19"/>
</dbReference>
<dbReference type="FunCoup" id="O64644">
    <property type="interactions" value="4357"/>
</dbReference>
<dbReference type="IntAct" id="O64644">
    <property type="interactions" value="6"/>
</dbReference>
<dbReference type="STRING" id="3702.O64644"/>
<dbReference type="MetOSite" id="O64644"/>
<dbReference type="PaxDb" id="3702-AT2G45640.1"/>
<dbReference type="ProteomicsDB" id="226664">
    <molecule id="O64644-1"/>
</dbReference>
<dbReference type="EnsemblPlants" id="AT2G45640.1">
    <molecule id="O64644-1"/>
    <property type="protein sequence ID" value="AT2G45640.1"/>
    <property type="gene ID" value="AT2G45640"/>
</dbReference>
<dbReference type="GeneID" id="819172"/>
<dbReference type="Gramene" id="AT2G45640.1">
    <molecule id="O64644-1"/>
    <property type="protein sequence ID" value="AT2G45640.1"/>
    <property type="gene ID" value="AT2G45640"/>
</dbReference>
<dbReference type="KEGG" id="ath:AT2G45640"/>
<dbReference type="Araport" id="AT2G45640"/>
<dbReference type="TAIR" id="AT2G45640">
    <property type="gene designation" value="SAP18"/>
</dbReference>
<dbReference type="eggNOG" id="KOG3391">
    <property type="taxonomic scope" value="Eukaryota"/>
</dbReference>
<dbReference type="InParanoid" id="O64644"/>
<dbReference type="OMA" id="TYRMREI"/>
<dbReference type="OrthoDB" id="440566at2759"/>
<dbReference type="PhylomeDB" id="O64644"/>
<dbReference type="CD-CODE" id="4299E36E">
    <property type="entry name" value="Nucleolus"/>
</dbReference>
<dbReference type="PRO" id="PR:O64644"/>
<dbReference type="Proteomes" id="UP000006548">
    <property type="component" value="Chromosome 2"/>
</dbReference>
<dbReference type="ExpressionAtlas" id="O64644">
    <property type="expression patterns" value="baseline and differential"/>
</dbReference>
<dbReference type="GO" id="GO:0005829">
    <property type="term" value="C:cytosol"/>
    <property type="evidence" value="ECO:0007005"/>
    <property type="project" value="TAIR"/>
</dbReference>
<dbReference type="GO" id="GO:0005730">
    <property type="term" value="C:nucleolus"/>
    <property type="evidence" value="ECO:0007005"/>
    <property type="project" value="TAIR"/>
</dbReference>
<dbReference type="GO" id="GO:0003714">
    <property type="term" value="F:transcription corepressor activity"/>
    <property type="evidence" value="ECO:0007669"/>
    <property type="project" value="InterPro"/>
</dbReference>
<dbReference type="GO" id="GO:0009737">
    <property type="term" value="P:response to abscisic acid"/>
    <property type="evidence" value="ECO:0000270"/>
    <property type="project" value="TAIR"/>
</dbReference>
<dbReference type="GO" id="GO:0009651">
    <property type="term" value="P:response to salt stress"/>
    <property type="evidence" value="ECO:0000315"/>
    <property type="project" value="TAIR"/>
</dbReference>
<dbReference type="FunFam" id="3.10.20.550:FF:000001">
    <property type="entry name" value="Histone deacetylase complex subunit SAP18"/>
    <property type="match status" value="1"/>
</dbReference>
<dbReference type="Gene3D" id="3.10.20.550">
    <property type="entry name" value="ASAP complex, SAP18 subunit"/>
    <property type="match status" value="1"/>
</dbReference>
<dbReference type="InterPro" id="IPR017250">
    <property type="entry name" value="Hist_deAcase_cplx_SAP18"/>
</dbReference>
<dbReference type="InterPro" id="IPR010516">
    <property type="entry name" value="SAP18"/>
</dbReference>
<dbReference type="InterPro" id="IPR042534">
    <property type="entry name" value="SAP18_sf"/>
</dbReference>
<dbReference type="PANTHER" id="PTHR13082:SF0">
    <property type="entry name" value="HISTONE DEACETYLASE COMPLEX SUBUNIT SAP18"/>
    <property type="match status" value="1"/>
</dbReference>
<dbReference type="PANTHER" id="PTHR13082">
    <property type="entry name" value="SAP18"/>
    <property type="match status" value="1"/>
</dbReference>
<dbReference type="Pfam" id="PF06487">
    <property type="entry name" value="SAP18"/>
    <property type="match status" value="1"/>
</dbReference>
<dbReference type="PIRSF" id="PIRSF037637">
    <property type="entry name" value="HDAC_SAP18"/>
    <property type="match status" value="1"/>
</dbReference>
<sequence length="152" mass="17164">MAEAARRQGGGRPLPPPPRGVNQQPPRPKPEPVDREKTCPLLLRVFTKSGGHHTSEDYAVRGKEPKDEVQIYTWKDASLRELTDLVKEVSVAARRRNARLSFAFVYPNNKGGYNVREVGETMAYPNRKQPDDSKTLSELPFEIGDYLDVAIY</sequence>
<evidence type="ECO:0000256" key="1">
    <source>
        <dbReference type="SAM" id="MobiDB-lite"/>
    </source>
</evidence>
<evidence type="ECO:0000269" key="2">
    <source>
    </source>
</evidence>
<evidence type="ECO:0000305" key="3"/>
<protein>
    <recommendedName>
        <fullName>Histone deacetylase complex subunit SAP18</fullName>
    </recommendedName>
    <alternativeName>
        <fullName>18 kDa Sin3-associated polypeptide</fullName>
    </alternativeName>
</protein>
<organism>
    <name type="scientific">Arabidopsis thaliana</name>
    <name type="common">Mouse-ear cress</name>
    <dbReference type="NCBI Taxonomy" id="3702"/>
    <lineage>
        <taxon>Eukaryota</taxon>
        <taxon>Viridiplantae</taxon>
        <taxon>Streptophyta</taxon>
        <taxon>Embryophyta</taxon>
        <taxon>Tracheophyta</taxon>
        <taxon>Spermatophyta</taxon>
        <taxon>Magnoliopsida</taxon>
        <taxon>eudicotyledons</taxon>
        <taxon>Gunneridae</taxon>
        <taxon>Pentapetalae</taxon>
        <taxon>rosids</taxon>
        <taxon>malvids</taxon>
        <taxon>Brassicales</taxon>
        <taxon>Brassicaceae</taxon>
        <taxon>Camelineae</taxon>
        <taxon>Arabidopsis</taxon>
    </lineage>
</organism>
<feature type="chain" id="PRO_0000220979" description="Histone deacetylase complex subunit SAP18">
    <location>
        <begin position="1"/>
        <end position="152"/>
    </location>
</feature>
<feature type="region of interest" description="Disordered" evidence="1">
    <location>
        <begin position="1"/>
        <end position="38"/>
    </location>
</feature>
<feature type="compositionally biased region" description="Basic and acidic residues" evidence="1">
    <location>
        <begin position="28"/>
        <end position="38"/>
    </location>
</feature>
<feature type="sequence conflict" description="In Ref. 4; AAM67239." evidence="3" ref="4">
    <original>G</original>
    <variation>S</variation>
    <location>
        <position position="62"/>
    </location>
</feature>
<gene>
    <name type="ordered locus">At2g45640</name>
    <name type="ORF">F17K2.17</name>
</gene>
<reference key="1">
    <citation type="journal article" date="1999" name="Nature">
        <title>Sequence and analysis of chromosome 2 of the plant Arabidopsis thaliana.</title>
        <authorList>
            <person name="Lin X."/>
            <person name="Kaul S."/>
            <person name="Rounsley S.D."/>
            <person name="Shea T.P."/>
            <person name="Benito M.-I."/>
            <person name="Town C.D."/>
            <person name="Fujii C.Y."/>
            <person name="Mason T.M."/>
            <person name="Bowman C.L."/>
            <person name="Barnstead M.E."/>
            <person name="Feldblyum T.V."/>
            <person name="Buell C.R."/>
            <person name="Ketchum K.A."/>
            <person name="Lee J.J."/>
            <person name="Ronning C.M."/>
            <person name="Koo H.L."/>
            <person name="Moffat K.S."/>
            <person name="Cronin L.A."/>
            <person name="Shen M."/>
            <person name="Pai G."/>
            <person name="Van Aken S."/>
            <person name="Umayam L."/>
            <person name="Tallon L.J."/>
            <person name="Gill J.E."/>
            <person name="Adams M.D."/>
            <person name="Carrera A.J."/>
            <person name="Creasy T.H."/>
            <person name="Goodman H.M."/>
            <person name="Somerville C.R."/>
            <person name="Copenhaver G.P."/>
            <person name="Preuss D."/>
            <person name="Nierman W.C."/>
            <person name="White O."/>
            <person name="Eisen J.A."/>
            <person name="Salzberg S.L."/>
            <person name="Fraser C.M."/>
            <person name="Venter J.C."/>
        </authorList>
    </citation>
    <scope>NUCLEOTIDE SEQUENCE [LARGE SCALE GENOMIC DNA]</scope>
    <source>
        <strain>cv. Columbia</strain>
    </source>
</reference>
<reference key="2">
    <citation type="journal article" date="2017" name="Plant J.">
        <title>Araport11: a complete reannotation of the Arabidopsis thaliana reference genome.</title>
        <authorList>
            <person name="Cheng C.Y."/>
            <person name="Krishnakumar V."/>
            <person name="Chan A.P."/>
            <person name="Thibaud-Nissen F."/>
            <person name="Schobel S."/>
            <person name="Town C.D."/>
        </authorList>
    </citation>
    <scope>GENOME REANNOTATION</scope>
    <source>
        <strain>cv. Columbia</strain>
    </source>
</reference>
<reference key="3">
    <citation type="journal article" date="2003" name="Science">
        <title>Empirical analysis of transcriptional activity in the Arabidopsis genome.</title>
        <authorList>
            <person name="Yamada K."/>
            <person name="Lim J."/>
            <person name="Dale J.M."/>
            <person name="Chen H."/>
            <person name="Shinn P."/>
            <person name="Palm C.J."/>
            <person name="Southwick A.M."/>
            <person name="Wu H.C."/>
            <person name="Kim C.J."/>
            <person name="Nguyen M."/>
            <person name="Pham P.K."/>
            <person name="Cheuk R.F."/>
            <person name="Karlin-Newmann G."/>
            <person name="Liu S.X."/>
            <person name="Lam B."/>
            <person name="Sakano H."/>
            <person name="Wu T."/>
            <person name="Yu G."/>
            <person name="Miranda M."/>
            <person name="Quach H.L."/>
            <person name="Tripp M."/>
            <person name="Chang C.H."/>
            <person name="Lee J.M."/>
            <person name="Toriumi M.J."/>
            <person name="Chan M.M."/>
            <person name="Tang C.C."/>
            <person name="Onodera C.S."/>
            <person name="Deng J.M."/>
            <person name="Akiyama K."/>
            <person name="Ansari Y."/>
            <person name="Arakawa T."/>
            <person name="Banh J."/>
            <person name="Banno F."/>
            <person name="Bowser L."/>
            <person name="Brooks S.Y."/>
            <person name="Carninci P."/>
            <person name="Chao Q."/>
            <person name="Choy N."/>
            <person name="Enju A."/>
            <person name="Goldsmith A.D."/>
            <person name="Gurjal M."/>
            <person name="Hansen N.F."/>
            <person name="Hayashizaki Y."/>
            <person name="Johnson-Hopson C."/>
            <person name="Hsuan V.W."/>
            <person name="Iida K."/>
            <person name="Karnes M."/>
            <person name="Khan S."/>
            <person name="Koesema E."/>
            <person name="Ishida J."/>
            <person name="Jiang P.X."/>
            <person name="Jones T."/>
            <person name="Kawai J."/>
            <person name="Kamiya A."/>
            <person name="Meyers C."/>
            <person name="Nakajima M."/>
            <person name="Narusaka M."/>
            <person name="Seki M."/>
            <person name="Sakurai T."/>
            <person name="Satou M."/>
            <person name="Tamse R."/>
            <person name="Vaysberg M."/>
            <person name="Wallender E.K."/>
            <person name="Wong C."/>
            <person name="Yamamura Y."/>
            <person name="Yuan S."/>
            <person name="Shinozaki K."/>
            <person name="Davis R.W."/>
            <person name="Theologis A."/>
            <person name="Ecker J.R."/>
        </authorList>
    </citation>
    <scope>NUCLEOTIDE SEQUENCE [LARGE SCALE MRNA]</scope>
    <source>
        <strain>cv. Columbia</strain>
    </source>
</reference>
<reference key="4">
    <citation type="submission" date="2002-03" db="EMBL/GenBank/DDBJ databases">
        <title>Full-length cDNA from Arabidopsis thaliana.</title>
        <authorList>
            <person name="Brover V.V."/>
            <person name="Troukhan M.E."/>
            <person name="Alexandrov N.A."/>
            <person name="Lu Y.-P."/>
            <person name="Flavell R.B."/>
            <person name="Feldmann K.A."/>
        </authorList>
    </citation>
    <scope>NUCLEOTIDE SEQUENCE [LARGE SCALE MRNA]</scope>
</reference>
<reference key="5">
    <citation type="submission" date="2006-07" db="EMBL/GenBank/DDBJ databases">
        <title>Large-scale analysis of RIKEN Arabidopsis full-length (RAFL) cDNAs.</title>
        <authorList>
            <person name="Totoki Y."/>
            <person name="Seki M."/>
            <person name="Ishida J."/>
            <person name="Nakajima M."/>
            <person name="Enju A."/>
            <person name="Kamiya A."/>
            <person name="Narusaka M."/>
            <person name="Shin-i T."/>
            <person name="Nakagawa M."/>
            <person name="Sakamoto N."/>
            <person name="Oishi K."/>
            <person name="Kohara Y."/>
            <person name="Kobayashi M."/>
            <person name="Toyoda A."/>
            <person name="Sakaki Y."/>
            <person name="Sakurai T."/>
            <person name="Iida K."/>
            <person name="Akiyama K."/>
            <person name="Satou M."/>
            <person name="Toyoda T."/>
            <person name="Konagaya A."/>
            <person name="Carninci P."/>
            <person name="Kawai J."/>
            <person name="Hayashizaki Y."/>
            <person name="Shinozaki K."/>
        </authorList>
    </citation>
    <scope>NUCLEOTIDE SEQUENCE [LARGE SCALE MRNA]</scope>
    <source>
        <strain>cv. Columbia</strain>
    </source>
</reference>
<reference key="6">
    <citation type="journal article" date="2006" name="Plant Mol. Biol.">
        <title>AtSAP18, an orthologue of human SAP18, is involved in the regulation of salt stress and mediates transcriptional repression in Arabidopsis.</title>
        <authorList>
            <person name="Song C.-P."/>
            <person name="Galbraith D.W."/>
        </authorList>
    </citation>
    <scope>FUNCTION</scope>
    <scope>INDUCTION</scope>
    <scope>TISSUE SPECIFICITY</scope>
    <scope>DISRUPTION PHENOTYPE</scope>
    <scope>INTERACTION WITH ERF3; ERF4 AND HDA19</scope>
</reference>
<name>SAP18_ARATH</name>
<keyword id="KW-0025">Alternative splicing</keyword>
<keyword id="KW-1185">Reference proteome</keyword>
<keyword id="KW-0678">Repressor</keyword>
<keyword id="KW-0346">Stress response</keyword>
<keyword id="KW-0804">Transcription</keyword>
<keyword id="KW-0805">Transcription regulation</keyword>